<name>RL9_LISIN</name>
<dbReference type="EMBL" id="AL596163">
    <property type="protein sequence ID" value="CAC95279.1"/>
    <property type="molecule type" value="Genomic_DNA"/>
</dbReference>
<dbReference type="PIR" id="AG1438">
    <property type="entry name" value="AG1438"/>
</dbReference>
<dbReference type="RefSeq" id="WP_003772680.1">
    <property type="nucleotide sequence ID" value="NC_003212.1"/>
</dbReference>
<dbReference type="SMR" id="Q92FQ7"/>
<dbReference type="STRING" id="272626.gene:17564357"/>
<dbReference type="KEGG" id="lin:rplI"/>
<dbReference type="eggNOG" id="COG0359">
    <property type="taxonomic scope" value="Bacteria"/>
</dbReference>
<dbReference type="HOGENOM" id="CLU_078938_3_2_9"/>
<dbReference type="OrthoDB" id="9788336at2"/>
<dbReference type="Proteomes" id="UP000002513">
    <property type="component" value="Chromosome"/>
</dbReference>
<dbReference type="GO" id="GO:1990904">
    <property type="term" value="C:ribonucleoprotein complex"/>
    <property type="evidence" value="ECO:0007669"/>
    <property type="project" value="UniProtKB-KW"/>
</dbReference>
<dbReference type="GO" id="GO:0005840">
    <property type="term" value="C:ribosome"/>
    <property type="evidence" value="ECO:0007669"/>
    <property type="project" value="UniProtKB-KW"/>
</dbReference>
<dbReference type="GO" id="GO:0019843">
    <property type="term" value="F:rRNA binding"/>
    <property type="evidence" value="ECO:0007669"/>
    <property type="project" value="UniProtKB-UniRule"/>
</dbReference>
<dbReference type="GO" id="GO:0003735">
    <property type="term" value="F:structural constituent of ribosome"/>
    <property type="evidence" value="ECO:0007669"/>
    <property type="project" value="InterPro"/>
</dbReference>
<dbReference type="GO" id="GO:0006412">
    <property type="term" value="P:translation"/>
    <property type="evidence" value="ECO:0007669"/>
    <property type="project" value="UniProtKB-UniRule"/>
</dbReference>
<dbReference type="FunFam" id="3.10.430.100:FF:000002">
    <property type="entry name" value="50S ribosomal protein L9"/>
    <property type="match status" value="1"/>
</dbReference>
<dbReference type="FunFam" id="3.40.5.10:FF:000002">
    <property type="entry name" value="50S ribosomal protein L9"/>
    <property type="match status" value="1"/>
</dbReference>
<dbReference type="Gene3D" id="3.10.430.100">
    <property type="entry name" value="Ribosomal protein L9, C-terminal domain"/>
    <property type="match status" value="1"/>
</dbReference>
<dbReference type="Gene3D" id="3.40.5.10">
    <property type="entry name" value="Ribosomal protein L9, N-terminal domain"/>
    <property type="match status" value="1"/>
</dbReference>
<dbReference type="HAMAP" id="MF_00503">
    <property type="entry name" value="Ribosomal_bL9"/>
    <property type="match status" value="1"/>
</dbReference>
<dbReference type="InterPro" id="IPR000244">
    <property type="entry name" value="Ribosomal_bL9"/>
</dbReference>
<dbReference type="InterPro" id="IPR009027">
    <property type="entry name" value="Ribosomal_bL9/RNase_H1_N"/>
</dbReference>
<dbReference type="InterPro" id="IPR020594">
    <property type="entry name" value="Ribosomal_bL9_bac/chp"/>
</dbReference>
<dbReference type="InterPro" id="IPR020069">
    <property type="entry name" value="Ribosomal_bL9_C"/>
</dbReference>
<dbReference type="InterPro" id="IPR036791">
    <property type="entry name" value="Ribosomal_bL9_C_sf"/>
</dbReference>
<dbReference type="InterPro" id="IPR020070">
    <property type="entry name" value="Ribosomal_bL9_N"/>
</dbReference>
<dbReference type="InterPro" id="IPR036935">
    <property type="entry name" value="Ribosomal_bL9_N_sf"/>
</dbReference>
<dbReference type="NCBIfam" id="TIGR00158">
    <property type="entry name" value="L9"/>
    <property type="match status" value="1"/>
</dbReference>
<dbReference type="PANTHER" id="PTHR21368">
    <property type="entry name" value="50S RIBOSOMAL PROTEIN L9"/>
    <property type="match status" value="1"/>
</dbReference>
<dbReference type="Pfam" id="PF03948">
    <property type="entry name" value="Ribosomal_L9_C"/>
    <property type="match status" value="1"/>
</dbReference>
<dbReference type="Pfam" id="PF01281">
    <property type="entry name" value="Ribosomal_L9_N"/>
    <property type="match status" value="1"/>
</dbReference>
<dbReference type="SUPFAM" id="SSF55658">
    <property type="entry name" value="L9 N-domain-like"/>
    <property type="match status" value="1"/>
</dbReference>
<dbReference type="SUPFAM" id="SSF55653">
    <property type="entry name" value="Ribosomal protein L9 C-domain"/>
    <property type="match status" value="1"/>
</dbReference>
<dbReference type="PROSITE" id="PS00651">
    <property type="entry name" value="RIBOSOMAL_L9"/>
    <property type="match status" value="1"/>
</dbReference>
<feature type="chain" id="PRO_0000176648" description="Large ribosomal subunit protein bL9">
    <location>
        <begin position="1"/>
        <end position="148"/>
    </location>
</feature>
<proteinExistence type="inferred from homology"/>
<accession>Q92FQ7</accession>
<reference key="1">
    <citation type="journal article" date="2001" name="Science">
        <title>Comparative genomics of Listeria species.</title>
        <authorList>
            <person name="Glaser P."/>
            <person name="Frangeul L."/>
            <person name="Buchrieser C."/>
            <person name="Rusniok C."/>
            <person name="Amend A."/>
            <person name="Baquero F."/>
            <person name="Berche P."/>
            <person name="Bloecker H."/>
            <person name="Brandt P."/>
            <person name="Chakraborty T."/>
            <person name="Charbit A."/>
            <person name="Chetouani F."/>
            <person name="Couve E."/>
            <person name="de Daruvar A."/>
            <person name="Dehoux P."/>
            <person name="Domann E."/>
            <person name="Dominguez-Bernal G."/>
            <person name="Duchaud E."/>
            <person name="Durant L."/>
            <person name="Dussurget O."/>
            <person name="Entian K.-D."/>
            <person name="Fsihi H."/>
            <person name="Garcia-del Portillo F."/>
            <person name="Garrido P."/>
            <person name="Gautier L."/>
            <person name="Goebel W."/>
            <person name="Gomez-Lopez N."/>
            <person name="Hain T."/>
            <person name="Hauf J."/>
            <person name="Jackson D."/>
            <person name="Jones L.-M."/>
            <person name="Kaerst U."/>
            <person name="Kreft J."/>
            <person name="Kuhn M."/>
            <person name="Kunst F."/>
            <person name="Kurapkat G."/>
            <person name="Madueno E."/>
            <person name="Maitournam A."/>
            <person name="Mata Vicente J."/>
            <person name="Ng E."/>
            <person name="Nedjari H."/>
            <person name="Nordsiek G."/>
            <person name="Novella S."/>
            <person name="de Pablos B."/>
            <person name="Perez-Diaz J.-C."/>
            <person name="Purcell R."/>
            <person name="Remmel B."/>
            <person name="Rose M."/>
            <person name="Schlueter T."/>
            <person name="Simoes N."/>
            <person name="Tierrez A."/>
            <person name="Vazquez-Boland J.-A."/>
            <person name="Voss H."/>
            <person name="Wehland J."/>
            <person name="Cossart P."/>
        </authorList>
    </citation>
    <scope>NUCLEOTIDE SEQUENCE [LARGE SCALE GENOMIC DNA]</scope>
    <source>
        <strain>ATCC BAA-680 / CLIP 11262</strain>
    </source>
</reference>
<protein>
    <recommendedName>
        <fullName evidence="1">Large ribosomal subunit protein bL9</fullName>
    </recommendedName>
    <alternativeName>
        <fullName evidence="2">50S ribosomal protein L9</fullName>
    </alternativeName>
</protein>
<sequence length="148" mass="16137">MKVIFLKDVKGKGKKGETKNVADGYANNFLIKNGYAVEASNAALSTLSAQKKKEDKLAAEELAEAKALKEKMEKLTVELKAKSGEGGRLFGSITSKQIAQTLEKTHGIKVDKRKMDLPEAIRALGHTKVPVKLHHEVTATLDVHVSEE</sequence>
<organism>
    <name type="scientific">Listeria innocua serovar 6a (strain ATCC BAA-680 / CLIP 11262)</name>
    <dbReference type="NCBI Taxonomy" id="272626"/>
    <lineage>
        <taxon>Bacteria</taxon>
        <taxon>Bacillati</taxon>
        <taxon>Bacillota</taxon>
        <taxon>Bacilli</taxon>
        <taxon>Bacillales</taxon>
        <taxon>Listeriaceae</taxon>
        <taxon>Listeria</taxon>
    </lineage>
</organism>
<comment type="function">
    <text evidence="1">Binds to the 23S rRNA.</text>
</comment>
<comment type="similarity">
    <text evidence="1">Belongs to the bacterial ribosomal protein bL9 family.</text>
</comment>
<gene>
    <name evidence="1" type="primary">rplI</name>
    <name type="ordered locus">lin0046</name>
</gene>
<evidence type="ECO:0000255" key="1">
    <source>
        <dbReference type="HAMAP-Rule" id="MF_00503"/>
    </source>
</evidence>
<evidence type="ECO:0000305" key="2"/>
<keyword id="KW-0687">Ribonucleoprotein</keyword>
<keyword id="KW-0689">Ribosomal protein</keyword>
<keyword id="KW-0694">RNA-binding</keyword>
<keyword id="KW-0699">rRNA-binding</keyword>